<sequence length="319" mass="33234">MAGRSDMDPPAAFSGFPALPAVAPSGPPPSPLAGAEPGREPEEAAAGRGEAAPTPAPGPGRRRRRPLQRGKPPYSYIALIAMALAHAPGRRLTLAAIYRFITERFAFYRDSPRKWQNSIRHNLTLNDCFVKVPREPGNPGKGNYWTLDPAAADMFDNGSFLRRRKRFKRAELPAHAAAAPGPPLPFPYAPYAPAPGPALLVPPPSAGPGPSPPARLFSVDSLVNLQPELAGLGAPEPPCCAAPDAAAAAFPPCAAAASPPLYSQVPDRLVLPATRPGPGPLPAEPLLALAGPAAALGPLSPGEAYLRQPGFASGLERYL</sequence>
<protein>
    <recommendedName>
        <fullName>Forkhead box protein E3</fullName>
    </recommendedName>
    <alternativeName>
        <fullName>Forkhead-related protein FKHL12</fullName>
    </alternativeName>
    <alternativeName>
        <fullName>Forkhead-related transcription factor 8</fullName>
        <shortName>FREAC-8</shortName>
    </alternativeName>
</protein>
<proteinExistence type="evidence at protein level"/>
<name>FOXE3_HUMAN</name>
<accession>Q13461</accession>
<accession>Q5SVY9</accession>
<accession>Q9NQV9</accession>
<comment type="function">
    <text evidence="1 8 9 11">Transcription factor that controls lens epithelial cell growth through regulation of proliferation, apoptosis and cell cycle (PubMed:22527307, PubMed:25504734). During lens development, controls the ratio of the lens fiber cells to the cells of the anterior lens epithelium by regulating the rate of proliferation and differentiation (By similarity). Controls lens vesicle closure and subsequent separation of the lens vesicle from ectoderm (By similarity). Controls the expression of DNAJB1 in a pathway that is crucial for the development of the anterior segment of the eye (PubMed:27218149).</text>
</comment>
<comment type="subcellular location">
    <subcellularLocation>
        <location evidence="9">Nucleus</location>
    </subcellularLocation>
</comment>
<comment type="developmental stage">
    <text evidence="7">Expressed in the lens during embryonic development. Predominantly expressed in the anterior lens epithelium but with some expression posteriorly. Not expressed in brain in embryos.</text>
</comment>
<comment type="disease" evidence="4 5 6 7 9">
    <disease id="DI-01416">
        <name>Anterior segment dysgenesis 2</name>
        <acronym>ASGD2</acronym>
        <description>A form of anterior segment dysgenesis, a group of defects affecting anterior structures of the eye including cornea, iris, lens, trabecular meshwork, and Schlemm canal. Anterior segment dysgeneses result from abnormal migration or differentiation of the neural crest derived mesenchymal cells that give rise to components of the anterior chamber during eye development. Different anterior segment anomalies may exist alone or in combination, including iris hypoplasia, enlarged or reduced corneal diameter, corneal vascularization and opacity, posterior embryotoxon, corectopia, polycoria, abnormal iridocorneal angle, ectopia lentis, and anterior synechiae between the iris and posterior corneal surface. Clinical conditions falling within the phenotypic spectrum of anterior segment dysgeneses include aniridia, Axenfeld anomaly, Reiger anomaly/syndrome, Peters anomaly, and iridogoniodysgenesis. Some ASGD2 patients show congenital primary aphakia, a defect caused by eye development arrest around the 4th-5th week of gestation. This prevents the formation of any lens structure and leads to severe secondary ocular anomalies, including a complete aplasia of the anterior segment of the eye. In contrast, in secondary aphakic eyes, lens induction has occurred, and the lens vesicle has developed to some degree but finally has progressively resorbed perinatally, leading, therefore, to less severe ocular defects. ASGD2 inheritance is autosomal recessive.</description>
        <dbReference type="MIM" id="610256"/>
    </disease>
    <text>The disease is caused by variants affecting the gene represented in this entry.</text>
</comment>
<comment type="disease" evidence="11">
    <disease id="DI-04893">
        <name>Cataract 34, multiple types</name>
        <acronym>CTRCT34</acronym>
        <description>An opacification of the crystalline lens of the eye that frequently results in visual impairment or blindness. Opacities vary in morphology, are often confined to a portion of the lens, and may be static or progressive. In general, the more posteriorly located and dense an opacity, the greater the impact on visual function.</description>
        <dbReference type="MIM" id="612968"/>
    </disease>
    <text>The disease is caused by variants affecting the gene represented in this entry.</text>
</comment>
<comment type="disease" evidence="10">
    <disease id="DI-04950">
        <name>Aortic aneurysm, familial thoracic 11</name>
        <acronym>AAT11</acronym>
        <description>A form of thoracic aortic aneurysm, a disease characterized by permanent dilation of the thoracic aorta usually due to degenerative changes in the aortic wall. It is primarily associated with a characteristic histologic appearance known as 'medial necrosis' or 'Erdheim cystic medial necrosis' in which there is degeneration and fragmentation of elastic fibers, loss of smooth muscle cells, and an accumulation of basophilic ground substance.</description>
        <dbReference type="MIM" id="617349"/>
    </disease>
    <text>Disease susceptibility is associated with variants affecting the gene represented in this entry.</text>
</comment>
<keyword id="KW-0993">Aortic aneurysm</keyword>
<keyword id="KW-0898">Cataract</keyword>
<keyword id="KW-0225">Disease variant</keyword>
<keyword id="KW-0238">DNA-binding</keyword>
<keyword id="KW-0539">Nucleus</keyword>
<keyword id="KW-1059">Peters anomaly</keyword>
<keyword id="KW-1267">Proteomics identification</keyword>
<keyword id="KW-1185">Reference proteome</keyword>
<keyword id="KW-0804">Transcription</keyword>
<keyword id="KW-0805">Transcription regulation</keyword>
<evidence type="ECO:0000250" key="1">
    <source>
        <dbReference type="UniProtKB" id="Q9QY14"/>
    </source>
</evidence>
<evidence type="ECO:0000255" key="2">
    <source>
        <dbReference type="PROSITE-ProRule" id="PRU00089"/>
    </source>
</evidence>
<evidence type="ECO:0000256" key="3">
    <source>
        <dbReference type="SAM" id="MobiDB-lite"/>
    </source>
</evidence>
<evidence type="ECO:0000269" key="4">
    <source>
    </source>
</evidence>
<evidence type="ECO:0000269" key="5">
    <source>
    </source>
</evidence>
<evidence type="ECO:0000269" key="6">
    <source>
    </source>
</evidence>
<evidence type="ECO:0000269" key="7">
    <source>
    </source>
</evidence>
<evidence type="ECO:0000269" key="8">
    <source>
    </source>
</evidence>
<evidence type="ECO:0000269" key="9">
    <source>
    </source>
</evidence>
<evidence type="ECO:0000269" key="10">
    <source>
    </source>
</evidence>
<evidence type="ECO:0000269" key="11">
    <source>
    </source>
</evidence>
<evidence type="ECO:0000305" key="12"/>
<reference key="1">
    <citation type="journal article" date="2001" name="Hum. Mol. Genet.">
        <title>Mutations in the human forkhead transcription factor FOXE3 associated with anterior segment ocular dysgenesis and cataracts.</title>
        <authorList>
            <person name="Semina E.V."/>
            <person name="Brownell I."/>
            <person name="Mintz-Hittner H.A."/>
            <person name="Murray J.C."/>
            <person name="Jamrich M."/>
        </authorList>
    </citation>
    <scope>NUCLEOTIDE SEQUENCE [GENOMIC DNA]</scope>
    <scope>VARIANTS ALA-196 AND GLY-300</scope>
    <scope>INVOLVEMENT IN ASGD2</scope>
</reference>
<reference key="2">
    <citation type="journal article" date="2002" name="Invest. Ophthalmol. Vis. Sci.">
        <title>Foxe3 haploinsufficiency in mice: a model for Peters' anomaly.</title>
        <authorList>
            <person name="Ormestad M."/>
            <person name="Blixt A."/>
            <person name="Churchill A."/>
            <person name="Martinsson T."/>
            <person name="Enerback S."/>
            <person name="Carlsson P."/>
        </authorList>
    </citation>
    <scope>NUCLEOTIDE SEQUENCE [MRNA]</scope>
    <scope>VARIANT ASGD2 LEU-90</scope>
    <source>
        <tissue>Lens epithelium</tissue>
    </source>
</reference>
<reference key="3">
    <citation type="journal article" date="2006" name="Nature">
        <title>The DNA sequence and biological annotation of human chromosome 1.</title>
        <authorList>
            <person name="Gregory S.G."/>
            <person name="Barlow K.F."/>
            <person name="McLay K.E."/>
            <person name="Kaul R."/>
            <person name="Swarbreck D."/>
            <person name="Dunham A."/>
            <person name="Scott C.E."/>
            <person name="Howe K.L."/>
            <person name="Woodfine K."/>
            <person name="Spencer C.C.A."/>
            <person name="Jones M.C."/>
            <person name="Gillson C."/>
            <person name="Searle S."/>
            <person name="Zhou Y."/>
            <person name="Kokocinski F."/>
            <person name="McDonald L."/>
            <person name="Evans R."/>
            <person name="Phillips K."/>
            <person name="Atkinson A."/>
            <person name="Cooper R."/>
            <person name="Jones C."/>
            <person name="Hall R.E."/>
            <person name="Andrews T.D."/>
            <person name="Lloyd C."/>
            <person name="Ainscough R."/>
            <person name="Almeida J.P."/>
            <person name="Ambrose K.D."/>
            <person name="Anderson F."/>
            <person name="Andrew R.W."/>
            <person name="Ashwell R.I.S."/>
            <person name="Aubin K."/>
            <person name="Babbage A.K."/>
            <person name="Bagguley C.L."/>
            <person name="Bailey J."/>
            <person name="Beasley H."/>
            <person name="Bethel G."/>
            <person name="Bird C.P."/>
            <person name="Bray-Allen S."/>
            <person name="Brown J.Y."/>
            <person name="Brown A.J."/>
            <person name="Buckley D."/>
            <person name="Burton J."/>
            <person name="Bye J."/>
            <person name="Carder C."/>
            <person name="Chapman J.C."/>
            <person name="Clark S.Y."/>
            <person name="Clarke G."/>
            <person name="Clee C."/>
            <person name="Cobley V."/>
            <person name="Collier R.E."/>
            <person name="Corby N."/>
            <person name="Coville G.J."/>
            <person name="Davies J."/>
            <person name="Deadman R."/>
            <person name="Dunn M."/>
            <person name="Earthrowl M."/>
            <person name="Ellington A.G."/>
            <person name="Errington H."/>
            <person name="Frankish A."/>
            <person name="Frankland J."/>
            <person name="French L."/>
            <person name="Garner P."/>
            <person name="Garnett J."/>
            <person name="Gay L."/>
            <person name="Ghori M.R.J."/>
            <person name="Gibson R."/>
            <person name="Gilby L.M."/>
            <person name="Gillett W."/>
            <person name="Glithero R.J."/>
            <person name="Grafham D.V."/>
            <person name="Griffiths C."/>
            <person name="Griffiths-Jones S."/>
            <person name="Grocock R."/>
            <person name="Hammond S."/>
            <person name="Harrison E.S.I."/>
            <person name="Hart E."/>
            <person name="Haugen E."/>
            <person name="Heath P.D."/>
            <person name="Holmes S."/>
            <person name="Holt K."/>
            <person name="Howden P.J."/>
            <person name="Hunt A.R."/>
            <person name="Hunt S.E."/>
            <person name="Hunter G."/>
            <person name="Isherwood J."/>
            <person name="James R."/>
            <person name="Johnson C."/>
            <person name="Johnson D."/>
            <person name="Joy A."/>
            <person name="Kay M."/>
            <person name="Kershaw J.K."/>
            <person name="Kibukawa M."/>
            <person name="Kimberley A.M."/>
            <person name="King A."/>
            <person name="Knights A.J."/>
            <person name="Lad H."/>
            <person name="Laird G."/>
            <person name="Lawlor S."/>
            <person name="Leongamornlert D.A."/>
            <person name="Lloyd D.M."/>
            <person name="Loveland J."/>
            <person name="Lovell J."/>
            <person name="Lush M.J."/>
            <person name="Lyne R."/>
            <person name="Martin S."/>
            <person name="Mashreghi-Mohammadi M."/>
            <person name="Matthews L."/>
            <person name="Matthews N.S.W."/>
            <person name="McLaren S."/>
            <person name="Milne S."/>
            <person name="Mistry S."/>
            <person name="Moore M.J.F."/>
            <person name="Nickerson T."/>
            <person name="O'Dell C.N."/>
            <person name="Oliver K."/>
            <person name="Palmeiri A."/>
            <person name="Palmer S.A."/>
            <person name="Parker A."/>
            <person name="Patel D."/>
            <person name="Pearce A.V."/>
            <person name="Peck A.I."/>
            <person name="Pelan S."/>
            <person name="Phelps K."/>
            <person name="Phillimore B.J."/>
            <person name="Plumb R."/>
            <person name="Rajan J."/>
            <person name="Raymond C."/>
            <person name="Rouse G."/>
            <person name="Saenphimmachak C."/>
            <person name="Sehra H.K."/>
            <person name="Sheridan E."/>
            <person name="Shownkeen R."/>
            <person name="Sims S."/>
            <person name="Skuce C.D."/>
            <person name="Smith M."/>
            <person name="Steward C."/>
            <person name="Subramanian S."/>
            <person name="Sycamore N."/>
            <person name="Tracey A."/>
            <person name="Tromans A."/>
            <person name="Van Helmond Z."/>
            <person name="Wall M."/>
            <person name="Wallis J.M."/>
            <person name="White S."/>
            <person name="Whitehead S.L."/>
            <person name="Wilkinson J.E."/>
            <person name="Willey D.L."/>
            <person name="Williams H."/>
            <person name="Wilming L."/>
            <person name="Wray P.W."/>
            <person name="Wu Z."/>
            <person name="Coulson A."/>
            <person name="Vaudin M."/>
            <person name="Sulston J.E."/>
            <person name="Durbin R.M."/>
            <person name="Hubbard T."/>
            <person name="Wooster R."/>
            <person name="Dunham I."/>
            <person name="Carter N.P."/>
            <person name="McVean G."/>
            <person name="Ross M.T."/>
            <person name="Harrow J."/>
            <person name="Olson M.V."/>
            <person name="Beck S."/>
            <person name="Rogers J."/>
            <person name="Bentley D.R."/>
        </authorList>
    </citation>
    <scope>NUCLEOTIDE SEQUENCE [LARGE SCALE GENOMIC DNA]</scope>
</reference>
<reference key="4">
    <citation type="journal article" date="1995" name="Genomics">
        <title>Chromosomal localization of six human forkhead genes, freac-1 (FKHL5), -3 (FKHL7), -4 (FKHL8), -5 (FKHL9), -6 (FKHL10), and -8 (FKHL12).</title>
        <authorList>
            <person name="Larsson C."/>
            <person name="Hellqvist M."/>
            <person name="Pierrou S."/>
            <person name="White I."/>
            <person name="Enerbaeck S."/>
            <person name="Carlsson P."/>
        </authorList>
    </citation>
    <scope>NUCLEOTIDE SEQUENCE [GENOMIC DNA] OF 66-171</scope>
</reference>
<reference key="5">
    <citation type="journal article" date="2012" name="Graefes Arch. Clin. Exp. Ophthalmol.">
        <title>Growth inhibition of human lens epithelial cells by short hairpin RNA in transcription factor forkhead box E3 (FOXE3).</title>
        <authorList>
            <person name="Wang Y."/>
            <person name="Li W."/>
            <person name="Wang Y."/>
            <person name="Huang Y."/>
        </authorList>
    </citation>
    <scope>FUNCTION</scope>
</reference>
<reference key="6">
    <citation type="journal article" date="2015" name="Hum. Mutat.">
        <title>Functional analysis of FOXE3 mutations causing dominant and recessive ocular anterior segment disease.</title>
        <authorList>
            <person name="Islam L."/>
            <person name="Kelberman D."/>
            <person name="Williamson L."/>
            <person name="Lewis N."/>
            <person name="Glindzicz M.B."/>
            <person name="Nischal K.K."/>
            <person name="Sowden J.C."/>
        </authorList>
    </citation>
    <scope>FUNCTION</scope>
    <scope>SUBCELLULAR LOCATION</scope>
    <scope>VARIANTS ASGD2 LEU-90 AND GLY-120</scope>
    <scope>CHARACTERIZATION OF VARIANTS ASGD2 LEU-90 AND GLY-120</scope>
</reference>
<reference key="7">
    <citation type="journal article" date="2006" name="Am. J. Hum. Genet.">
        <title>Homozygous nonsense mutation in the FOXE3 gene as a cause of congenital primary aphakia in humans.</title>
        <authorList>
            <person name="Valleix S."/>
            <person name="Niel F."/>
            <person name="Nedelec B."/>
            <person name="Algros M.-P."/>
            <person name="Schwartz C."/>
            <person name="Delbosc B."/>
            <person name="Delpech M."/>
            <person name="Kantelip B."/>
        </authorList>
    </citation>
    <scope>INVOLVEMENT IN ASGD2</scope>
</reference>
<reference key="8">
    <citation type="journal article" date="2009" name="Hum. Mutat.">
        <title>Seeing clearly: the dominant and recessive nature of FOXE3 in eye developmental anomalies.</title>
        <authorList>
            <person name="Iseri S.U."/>
            <person name="Osborne R.J."/>
            <person name="Farrall M."/>
            <person name="Wyatt A.W."/>
            <person name="Mirza G."/>
            <person name="Nurnberg G."/>
            <person name="Kluck C."/>
            <person name="Herbert H."/>
            <person name="Martin A."/>
            <person name="Hussain M.S."/>
            <person name="Collin J.R."/>
            <person name="Lathrop M."/>
            <person name="Nurnberg P."/>
            <person name="Ragoussis J."/>
            <person name="Ragge N.K."/>
        </authorList>
    </citation>
    <scope>VARIANT ALA-49</scope>
    <scope>VARIANT ASGD2 VAL-82</scope>
    <scope>DEVELOPMENTAL STAGE</scope>
</reference>
<reference key="9">
    <citation type="journal article" date="2016" name="J. Clin. Invest.">
        <title>FOXE3 mutations predispose to thoracic aortic aneurysms and dissections.</title>
        <authorList>
            <person name="Kuang S.Q."/>
            <person name="Medina-Martinez O."/>
            <person name="Guo D.C."/>
            <person name="Gong L."/>
            <person name="Regalado E.S."/>
            <person name="Reynolds C.L."/>
            <person name="Boileau C."/>
            <person name="Jondeau G."/>
            <person name="Prakash S.K."/>
            <person name="Kwartler C.S."/>
            <person name="Zhu L.Y."/>
            <person name="Peters A.M."/>
            <person name="Duan X.Y."/>
            <person name="Bamshad M.J."/>
            <person name="Shendure J."/>
            <person name="Nickerson D.A."/>
            <person name="Santos-Cortez R.L."/>
            <person name="Dong X."/>
            <person name="Leal S.M."/>
            <person name="Majesky M.W."/>
            <person name="Swindell E.C."/>
            <person name="Jamrich M."/>
            <person name="Milewicz D.M."/>
        </authorList>
    </citation>
    <scope>INVOLVEMENT IN AAT11</scope>
    <scope>VARIANTS AAT11 ASP-137 AND HIS-153</scope>
</reference>
<reference key="10">
    <citation type="journal article" date="2016" name="Nat. Commun.">
        <title>FOXE3 contributes to Peters anomaly through transcriptional regulation of an autophagy-associated protein termed DNAJB1.</title>
        <authorList>
            <person name="Khan S.Y."/>
            <person name="Vasanth S."/>
            <person name="Kabir F."/>
            <person name="Gottsch J.D."/>
            <person name="Khan A.O."/>
            <person name="Chaerkady R."/>
            <person name="Lee M.C."/>
            <person name="Leitch C.C."/>
            <person name="Ma Z."/>
            <person name="Laux J."/>
            <person name="Villasmil R."/>
            <person name="Khan S.N."/>
            <person name="Riazuddin S."/>
            <person name="Akram J."/>
            <person name="Cole R.N."/>
            <person name="Talbot C.C."/>
            <person name="Pourmand N."/>
            <person name="Zaghloul N.A."/>
            <person name="Hejtmancik J.F."/>
            <person name="Riazuddin S.A."/>
        </authorList>
    </citation>
    <scope>FUNCTION</scope>
    <scope>INVOLVEMENT IN CTRCT34</scope>
    <scope>VARIANTS CTRCT34 LYS-103 AND LYS-117</scope>
    <scope>CHARACTERIZATION OF VARIANTS CTRCT34 LYS-103 AND LYS-117</scope>
</reference>
<dbReference type="EMBL" id="AF275722">
    <property type="protein sequence ID" value="AAF82793.1"/>
    <property type="molecule type" value="mRNA"/>
</dbReference>
<dbReference type="EMBL" id="AL607122">
    <property type="status" value="NOT_ANNOTATED_CDS"/>
    <property type="molecule type" value="Genomic_DNA"/>
</dbReference>
<dbReference type="EMBL" id="U42990">
    <property type="protein sequence ID" value="AAB48856.1"/>
    <property type="molecule type" value="Genomic_DNA"/>
</dbReference>
<dbReference type="CCDS" id="CCDS550.1"/>
<dbReference type="PIR" id="G02311">
    <property type="entry name" value="G02311"/>
</dbReference>
<dbReference type="RefSeq" id="NP_036318.1">
    <property type="nucleotide sequence ID" value="NM_012186.3"/>
</dbReference>
<dbReference type="SMR" id="Q13461"/>
<dbReference type="BioGRID" id="108590">
    <property type="interactions" value="9"/>
</dbReference>
<dbReference type="FunCoup" id="Q13461">
    <property type="interactions" value="1"/>
</dbReference>
<dbReference type="IntAct" id="Q13461">
    <property type="interactions" value="7"/>
</dbReference>
<dbReference type="STRING" id="9606.ENSP00000334472"/>
<dbReference type="GlyGen" id="Q13461">
    <property type="glycosylation" value="1 site"/>
</dbReference>
<dbReference type="iPTMnet" id="Q13461"/>
<dbReference type="PhosphoSitePlus" id="Q13461"/>
<dbReference type="BioMuta" id="FOXE3"/>
<dbReference type="DMDM" id="12644406"/>
<dbReference type="MassIVE" id="Q13461"/>
<dbReference type="PaxDb" id="9606-ENSP00000334472"/>
<dbReference type="PeptideAtlas" id="Q13461"/>
<dbReference type="ProteomicsDB" id="59460"/>
<dbReference type="Antibodypedia" id="18909">
    <property type="antibodies" value="215 antibodies from 28 providers"/>
</dbReference>
<dbReference type="DNASU" id="2301"/>
<dbReference type="Ensembl" id="ENST00000335071.4">
    <property type="protein sequence ID" value="ENSP00000334472.2"/>
    <property type="gene ID" value="ENSG00000186790.6"/>
</dbReference>
<dbReference type="GeneID" id="2301"/>
<dbReference type="KEGG" id="hsa:2301"/>
<dbReference type="MANE-Select" id="ENST00000335071.4">
    <property type="protein sequence ID" value="ENSP00000334472.2"/>
    <property type="RefSeq nucleotide sequence ID" value="NM_012186.3"/>
    <property type="RefSeq protein sequence ID" value="NP_036318.1"/>
</dbReference>
<dbReference type="UCSC" id="uc001crk.3">
    <property type="organism name" value="human"/>
</dbReference>
<dbReference type="AGR" id="HGNC:3808"/>
<dbReference type="CTD" id="2301"/>
<dbReference type="DisGeNET" id="2301"/>
<dbReference type="GeneCards" id="FOXE3"/>
<dbReference type="GeneReviews" id="FOXE3"/>
<dbReference type="HGNC" id="HGNC:3808">
    <property type="gene designation" value="FOXE3"/>
</dbReference>
<dbReference type="HPA" id="ENSG00000186790">
    <property type="expression patterns" value="Not detected"/>
</dbReference>
<dbReference type="MalaCards" id="FOXE3"/>
<dbReference type="MIM" id="601094">
    <property type="type" value="gene"/>
</dbReference>
<dbReference type="MIM" id="610256">
    <property type="type" value="phenotype"/>
</dbReference>
<dbReference type="MIM" id="612968">
    <property type="type" value="phenotype"/>
</dbReference>
<dbReference type="MIM" id="617349">
    <property type="type" value="phenotype"/>
</dbReference>
<dbReference type="neXtProt" id="NX_Q13461"/>
<dbReference type="OpenTargets" id="ENSG00000186790"/>
<dbReference type="Orphanet" id="83461">
    <property type="disease" value="Congenital primary aphakia"/>
</dbReference>
<dbReference type="Orphanet" id="91387">
    <property type="disease" value="Familial thoracic aortic aneurysm and aortic dissection"/>
</dbReference>
<dbReference type="Orphanet" id="708">
    <property type="disease" value="Peters anomaly"/>
</dbReference>
<dbReference type="PharmGKB" id="PA28225"/>
<dbReference type="VEuPathDB" id="HostDB:ENSG00000186790"/>
<dbReference type="eggNOG" id="KOG2294">
    <property type="taxonomic scope" value="Eukaryota"/>
</dbReference>
<dbReference type="GeneTree" id="ENSGT00940000163987"/>
<dbReference type="HOGENOM" id="CLU_023357_0_1_1"/>
<dbReference type="InParanoid" id="Q13461"/>
<dbReference type="OMA" id="CWENGPA"/>
<dbReference type="OrthoDB" id="5402974at2759"/>
<dbReference type="PAN-GO" id="Q13461">
    <property type="GO annotations" value="5 GO annotations based on evolutionary models"/>
</dbReference>
<dbReference type="PhylomeDB" id="Q13461"/>
<dbReference type="TreeFam" id="TF316127"/>
<dbReference type="PathwayCommons" id="Q13461"/>
<dbReference type="BioGRID-ORCS" id="2301">
    <property type="hits" value="12 hits in 1169 CRISPR screens"/>
</dbReference>
<dbReference type="GeneWiki" id="FOXE3"/>
<dbReference type="GenomeRNAi" id="2301"/>
<dbReference type="Pharos" id="Q13461">
    <property type="development level" value="Tbio"/>
</dbReference>
<dbReference type="PRO" id="PR:Q13461"/>
<dbReference type="Proteomes" id="UP000005640">
    <property type="component" value="Chromosome 1"/>
</dbReference>
<dbReference type="RNAct" id="Q13461">
    <property type="molecule type" value="protein"/>
</dbReference>
<dbReference type="Bgee" id="ENSG00000186790">
    <property type="expression patterns" value="Expressed in primordial germ cell in gonad and 27 other cell types or tissues"/>
</dbReference>
<dbReference type="ExpressionAtlas" id="Q13461">
    <property type="expression patterns" value="baseline and differential"/>
</dbReference>
<dbReference type="GO" id="GO:0000785">
    <property type="term" value="C:chromatin"/>
    <property type="evidence" value="ECO:0000247"/>
    <property type="project" value="NTNU_SB"/>
</dbReference>
<dbReference type="GO" id="GO:0005634">
    <property type="term" value="C:nucleus"/>
    <property type="evidence" value="ECO:0000314"/>
    <property type="project" value="UniProtKB"/>
</dbReference>
<dbReference type="GO" id="GO:0005667">
    <property type="term" value="C:transcription regulator complex"/>
    <property type="evidence" value="ECO:0000314"/>
    <property type="project" value="MGI"/>
</dbReference>
<dbReference type="GO" id="GO:0003677">
    <property type="term" value="F:DNA binding"/>
    <property type="evidence" value="ECO:0000314"/>
    <property type="project" value="UniProtKB"/>
</dbReference>
<dbReference type="GO" id="GO:0003700">
    <property type="term" value="F:DNA-binding transcription factor activity"/>
    <property type="evidence" value="ECO:0000314"/>
    <property type="project" value="UniProtKB"/>
</dbReference>
<dbReference type="GO" id="GO:0000981">
    <property type="term" value="F:DNA-binding transcription factor activity, RNA polymerase II-specific"/>
    <property type="evidence" value="ECO:0000247"/>
    <property type="project" value="NTNU_SB"/>
</dbReference>
<dbReference type="GO" id="GO:0000978">
    <property type="term" value="F:RNA polymerase II cis-regulatory region sequence-specific DNA binding"/>
    <property type="evidence" value="ECO:0000318"/>
    <property type="project" value="GO_Central"/>
</dbReference>
<dbReference type="GO" id="GO:0043565">
    <property type="term" value="F:sequence-specific DNA binding"/>
    <property type="evidence" value="ECO:0000250"/>
    <property type="project" value="UniProtKB"/>
</dbReference>
<dbReference type="GO" id="GO:0009653">
    <property type="term" value="P:anatomical structure morphogenesis"/>
    <property type="evidence" value="ECO:0000318"/>
    <property type="project" value="GO_Central"/>
</dbReference>
<dbReference type="GO" id="GO:0048468">
    <property type="term" value="P:cell development"/>
    <property type="evidence" value="ECO:0007669"/>
    <property type="project" value="Ensembl"/>
</dbReference>
<dbReference type="GO" id="GO:0030154">
    <property type="term" value="P:cell differentiation"/>
    <property type="evidence" value="ECO:0000318"/>
    <property type="project" value="GO_Central"/>
</dbReference>
<dbReference type="GO" id="GO:0061073">
    <property type="term" value="P:ciliary body morphogenesis"/>
    <property type="evidence" value="ECO:0000250"/>
    <property type="project" value="UniProtKB"/>
</dbReference>
<dbReference type="GO" id="GO:0061303">
    <property type="term" value="P:cornea development in camera-type eye"/>
    <property type="evidence" value="ECO:0000250"/>
    <property type="project" value="UniProtKB"/>
</dbReference>
<dbReference type="GO" id="GO:0050673">
    <property type="term" value="P:epithelial cell proliferation"/>
    <property type="evidence" value="ECO:0007669"/>
    <property type="project" value="Ensembl"/>
</dbReference>
<dbReference type="GO" id="GO:0001654">
    <property type="term" value="P:eye development"/>
    <property type="evidence" value="ECO:0000315"/>
    <property type="project" value="UniProtKB"/>
</dbReference>
<dbReference type="GO" id="GO:0061072">
    <property type="term" value="P:iris morphogenesis"/>
    <property type="evidence" value="ECO:0000250"/>
    <property type="project" value="UniProtKB"/>
</dbReference>
<dbReference type="GO" id="GO:0002088">
    <property type="term" value="P:lens development in camera-type eye"/>
    <property type="evidence" value="ECO:0000315"/>
    <property type="project" value="UniProtKB"/>
</dbReference>
<dbReference type="GO" id="GO:0042789">
    <property type="term" value="P:mRNA transcription by RNA polymerase II"/>
    <property type="evidence" value="ECO:0000314"/>
    <property type="project" value="UniProtKB"/>
</dbReference>
<dbReference type="GO" id="GO:0043066">
    <property type="term" value="P:negative regulation of apoptotic process"/>
    <property type="evidence" value="ECO:0000315"/>
    <property type="project" value="UniProtKB"/>
</dbReference>
<dbReference type="GO" id="GO:1902747">
    <property type="term" value="P:negative regulation of lens fiber cell differentiation"/>
    <property type="evidence" value="ECO:0000250"/>
    <property type="project" value="UniProtKB"/>
</dbReference>
<dbReference type="GO" id="GO:2001111">
    <property type="term" value="P:positive regulation of lens epithelial cell proliferation"/>
    <property type="evidence" value="ECO:0000315"/>
    <property type="project" value="UniProtKB"/>
</dbReference>
<dbReference type="GO" id="GO:0051726">
    <property type="term" value="P:regulation of cell cycle"/>
    <property type="evidence" value="ECO:0000315"/>
    <property type="project" value="UniProtKB"/>
</dbReference>
<dbReference type="GO" id="GO:0006357">
    <property type="term" value="P:regulation of transcription by RNA polymerase II"/>
    <property type="evidence" value="ECO:0000318"/>
    <property type="project" value="GO_Central"/>
</dbReference>
<dbReference type="GO" id="GO:0002930">
    <property type="term" value="P:trabecular meshwork development"/>
    <property type="evidence" value="ECO:0000250"/>
    <property type="project" value="UniProtKB"/>
</dbReference>
<dbReference type="GO" id="GO:0006366">
    <property type="term" value="P:transcription by RNA polymerase II"/>
    <property type="evidence" value="ECO:0000314"/>
    <property type="project" value="MGI"/>
</dbReference>
<dbReference type="FunFam" id="1.10.10.10:FF:000201">
    <property type="entry name" value="Forkhead box E1"/>
    <property type="match status" value="1"/>
</dbReference>
<dbReference type="Gene3D" id="1.10.10.10">
    <property type="entry name" value="Winged helix-like DNA-binding domain superfamily/Winged helix DNA-binding domain"/>
    <property type="match status" value="1"/>
</dbReference>
<dbReference type="InterPro" id="IPR001766">
    <property type="entry name" value="Fork_head_dom"/>
</dbReference>
<dbReference type="InterPro" id="IPR050211">
    <property type="entry name" value="FOX_domain-containing"/>
</dbReference>
<dbReference type="InterPro" id="IPR018122">
    <property type="entry name" value="TF_fork_head_CS_1"/>
</dbReference>
<dbReference type="InterPro" id="IPR030456">
    <property type="entry name" value="TF_fork_head_CS_2"/>
</dbReference>
<dbReference type="InterPro" id="IPR036388">
    <property type="entry name" value="WH-like_DNA-bd_sf"/>
</dbReference>
<dbReference type="InterPro" id="IPR036390">
    <property type="entry name" value="WH_DNA-bd_sf"/>
</dbReference>
<dbReference type="PANTHER" id="PTHR11829">
    <property type="entry name" value="FORKHEAD BOX PROTEIN"/>
    <property type="match status" value="1"/>
</dbReference>
<dbReference type="PANTHER" id="PTHR11829:SF156">
    <property type="entry name" value="FORKHEAD BOX PROTEIN E3"/>
    <property type="match status" value="1"/>
</dbReference>
<dbReference type="Pfam" id="PF00250">
    <property type="entry name" value="Forkhead"/>
    <property type="match status" value="1"/>
</dbReference>
<dbReference type="PRINTS" id="PR00053">
    <property type="entry name" value="FORKHEAD"/>
</dbReference>
<dbReference type="SMART" id="SM00339">
    <property type="entry name" value="FH"/>
    <property type="match status" value="1"/>
</dbReference>
<dbReference type="SUPFAM" id="SSF46785">
    <property type="entry name" value="Winged helix' DNA-binding domain"/>
    <property type="match status" value="1"/>
</dbReference>
<dbReference type="PROSITE" id="PS00657">
    <property type="entry name" value="FORK_HEAD_1"/>
    <property type="match status" value="1"/>
</dbReference>
<dbReference type="PROSITE" id="PS00658">
    <property type="entry name" value="FORK_HEAD_2"/>
    <property type="match status" value="1"/>
</dbReference>
<dbReference type="PROSITE" id="PS50039">
    <property type="entry name" value="FORK_HEAD_3"/>
    <property type="match status" value="1"/>
</dbReference>
<feature type="chain" id="PRO_0000091829" description="Forkhead box protein E3">
    <location>
        <begin position="1"/>
        <end position="319"/>
    </location>
</feature>
<feature type="DNA-binding region" description="Fork-head" evidence="2">
    <location>
        <begin position="71"/>
        <end position="165"/>
    </location>
</feature>
<feature type="region of interest" description="Disordered" evidence="3">
    <location>
        <begin position="1"/>
        <end position="69"/>
    </location>
</feature>
<feature type="compositionally biased region" description="Low complexity" evidence="3">
    <location>
        <begin position="44"/>
        <end position="53"/>
    </location>
</feature>
<feature type="sequence variant" id="VAR_062582" description="In dbSNP:rs566961335." evidence="7">
    <original>G</original>
    <variation>A</variation>
    <location>
        <position position="49"/>
    </location>
</feature>
<feature type="sequence variant" id="VAR_062583" description="In ASGD2; uncertain significance; dbSNP:rs746531116." evidence="7">
    <original>M</original>
    <variation>V</variation>
    <location>
        <position position="82"/>
    </location>
</feature>
<feature type="sequence variant" id="VAR_062584" description="In ASGD2; significant reduction of sequence-specific DNA binding transcription factor activity; dbSNP:rs371048362." evidence="5 9">
    <original>R</original>
    <variation>L</variation>
    <location>
        <position position="90"/>
    </location>
</feature>
<feature type="sequence variant" id="VAR_078112" description="In CTRCT34; decreases DNAJB1 expression; dbSNP:rs1057518738." evidence="11">
    <original>E</original>
    <variation>K</variation>
    <location>
        <position position="103"/>
    </location>
</feature>
<feature type="sequence variant" id="VAR_078113" description="In CTRCT34; decreases DNAJB1 expression; dbSNP:rs1057518737." evidence="11">
    <original>N</original>
    <variation>K</variation>
    <location>
        <position position="117"/>
    </location>
</feature>
<feature type="sequence variant" id="VAR_072783" description="In ASGD2; complete loss of DNA binding; significant reduction of sequence-specific DNA binding transcription factor activity." evidence="9">
    <original>R</original>
    <variation>G</variation>
    <location>
        <position position="120"/>
    </location>
</feature>
<feature type="sequence variant" id="VAR_078114" description="In AAT11; dbSNP:rs749960549." evidence="10">
    <original>G</original>
    <variation>D</variation>
    <location>
        <position position="137"/>
    </location>
</feature>
<feature type="sequence variant" id="VAR_078115" description="In AAT11; dbSNP:rs367943249." evidence="10">
    <original>D</original>
    <variation>H</variation>
    <location>
        <position position="153"/>
    </location>
</feature>
<feature type="sequence variant" id="VAR_026234" description="In dbSNP:rs281865461." evidence="4">
    <original>G</original>
    <variation>A</variation>
    <location>
        <position position="196"/>
    </location>
</feature>
<feature type="sequence variant" id="VAR_026235" description="In dbSNP:rs552420470." evidence="4">
    <original>S</original>
    <variation>G</variation>
    <location>
        <position position="300"/>
    </location>
</feature>
<feature type="sequence conflict" description="In Ref. 4; AAB48856." evidence="12" ref="4">
    <original>R</original>
    <variation>P</variation>
    <location>
        <position position="162"/>
    </location>
</feature>
<organism>
    <name type="scientific">Homo sapiens</name>
    <name type="common">Human</name>
    <dbReference type="NCBI Taxonomy" id="9606"/>
    <lineage>
        <taxon>Eukaryota</taxon>
        <taxon>Metazoa</taxon>
        <taxon>Chordata</taxon>
        <taxon>Craniata</taxon>
        <taxon>Vertebrata</taxon>
        <taxon>Euteleostomi</taxon>
        <taxon>Mammalia</taxon>
        <taxon>Eutheria</taxon>
        <taxon>Euarchontoglires</taxon>
        <taxon>Primates</taxon>
        <taxon>Haplorrhini</taxon>
        <taxon>Catarrhini</taxon>
        <taxon>Hominidae</taxon>
        <taxon>Homo</taxon>
    </lineage>
</organism>
<gene>
    <name type="primary">FOXE3</name>
    <name type="synonym">FKHL12</name>
    <name type="synonym">FREAC8</name>
</gene>